<protein>
    <recommendedName>
        <fullName evidence="1">Small ribosomal subunit protein uS2</fullName>
    </recommendedName>
    <alternativeName>
        <fullName evidence="2">30S ribosomal protein S2</fullName>
    </alternativeName>
</protein>
<proteinExistence type="inferred from homology"/>
<keyword id="KW-1185">Reference proteome</keyword>
<keyword id="KW-0687">Ribonucleoprotein</keyword>
<keyword id="KW-0689">Ribosomal protein</keyword>
<feature type="chain" id="PRO_1000115033" description="Small ribosomal subunit protein uS2">
    <location>
        <begin position="1"/>
        <end position="248"/>
    </location>
</feature>
<reference key="1">
    <citation type="submission" date="2008-03" db="EMBL/GenBank/DDBJ databases">
        <title>Complete sequence of Leptothrix cholodnii SP-6.</title>
        <authorList>
            <consortium name="US DOE Joint Genome Institute"/>
            <person name="Copeland A."/>
            <person name="Lucas S."/>
            <person name="Lapidus A."/>
            <person name="Glavina del Rio T."/>
            <person name="Dalin E."/>
            <person name="Tice H."/>
            <person name="Bruce D."/>
            <person name="Goodwin L."/>
            <person name="Pitluck S."/>
            <person name="Chertkov O."/>
            <person name="Brettin T."/>
            <person name="Detter J.C."/>
            <person name="Han C."/>
            <person name="Kuske C.R."/>
            <person name="Schmutz J."/>
            <person name="Larimer F."/>
            <person name="Land M."/>
            <person name="Hauser L."/>
            <person name="Kyrpides N."/>
            <person name="Lykidis A."/>
            <person name="Emerson D."/>
            <person name="Richardson P."/>
        </authorList>
    </citation>
    <scope>NUCLEOTIDE SEQUENCE [LARGE SCALE GENOMIC DNA]</scope>
    <source>
        <strain>ATCC 51168 / LMG 8142 / SP-6</strain>
    </source>
</reference>
<dbReference type="EMBL" id="CP001013">
    <property type="protein sequence ID" value="ACB35115.1"/>
    <property type="molecule type" value="Genomic_DNA"/>
</dbReference>
<dbReference type="RefSeq" id="WP_012347869.1">
    <property type="nucleotide sequence ID" value="NC_010524.1"/>
</dbReference>
<dbReference type="SMR" id="B1XXJ5"/>
<dbReference type="STRING" id="395495.Lcho_2850"/>
<dbReference type="KEGG" id="lch:Lcho_2850"/>
<dbReference type="eggNOG" id="COG0052">
    <property type="taxonomic scope" value="Bacteria"/>
</dbReference>
<dbReference type="HOGENOM" id="CLU_040318_1_2_4"/>
<dbReference type="OrthoDB" id="9808036at2"/>
<dbReference type="Proteomes" id="UP000001693">
    <property type="component" value="Chromosome"/>
</dbReference>
<dbReference type="GO" id="GO:0022627">
    <property type="term" value="C:cytosolic small ribosomal subunit"/>
    <property type="evidence" value="ECO:0007669"/>
    <property type="project" value="TreeGrafter"/>
</dbReference>
<dbReference type="GO" id="GO:0003735">
    <property type="term" value="F:structural constituent of ribosome"/>
    <property type="evidence" value="ECO:0007669"/>
    <property type="project" value="InterPro"/>
</dbReference>
<dbReference type="GO" id="GO:0006412">
    <property type="term" value="P:translation"/>
    <property type="evidence" value="ECO:0007669"/>
    <property type="project" value="UniProtKB-UniRule"/>
</dbReference>
<dbReference type="CDD" id="cd01425">
    <property type="entry name" value="RPS2"/>
    <property type="match status" value="1"/>
</dbReference>
<dbReference type="Gene3D" id="3.40.50.10490">
    <property type="entry name" value="Glucose-6-phosphate isomerase like protein, domain 1"/>
    <property type="match status" value="1"/>
</dbReference>
<dbReference type="Gene3D" id="1.10.287.610">
    <property type="entry name" value="Helix hairpin bin"/>
    <property type="match status" value="1"/>
</dbReference>
<dbReference type="HAMAP" id="MF_00291_B">
    <property type="entry name" value="Ribosomal_uS2_B"/>
    <property type="match status" value="1"/>
</dbReference>
<dbReference type="InterPro" id="IPR001865">
    <property type="entry name" value="Ribosomal_uS2"/>
</dbReference>
<dbReference type="InterPro" id="IPR005706">
    <property type="entry name" value="Ribosomal_uS2_bac/mit/plastid"/>
</dbReference>
<dbReference type="InterPro" id="IPR018130">
    <property type="entry name" value="Ribosomal_uS2_CS"/>
</dbReference>
<dbReference type="InterPro" id="IPR023591">
    <property type="entry name" value="Ribosomal_uS2_flav_dom_sf"/>
</dbReference>
<dbReference type="NCBIfam" id="TIGR01011">
    <property type="entry name" value="rpsB_bact"/>
    <property type="match status" value="1"/>
</dbReference>
<dbReference type="PANTHER" id="PTHR12534">
    <property type="entry name" value="30S RIBOSOMAL PROTEIN S2 PROKARYOTIC AND ORGANELLAR"/>
    <property type="match status" value="1"/>
</dbReference>
<dbReference type="PANTHER" id="PTHR12534:SF0">
    <property type="entry name" value="SMALL RIBOSOMAL SUBUNIT PROTEIN US2M"/>
    <property type="match status" value="1"/>
</dbReference>
<dbReference type="Pfam" id="PF00318">
    <property type="entry name" value="Ribosomal_S2"/>
    <property type="match status" value="1"/>
</dbReference>
<dbReference type="PRINTS" id="PR00395">
    <property type="entry name" value="RIBOSOMALS2"/>
</dbReference>
<dbReference type="SUPFAM" id="SSF52313">
    <property type="entry name" value="Ribosomal protein S2"/>
    <property type="match status" value="1"/>
</dbReference>
<dbReference type="PROSITE" id="PS00962">
    <property type="entry name" value="RIBOSOMAL_S2_1"/>
    <property type="match status" value="1"/>
</dbReference>
<gene>
    <name evidence="1" type="primary">rpsB</name>
    <name type="ordered locus">Lcho_2850</name>
</gene>
<evidence type="ECO:0000255" key="1">
    <source>
        <dbReference type="HAMAP-Rule" id="MF_00291"/>
    </source>
</evidence>
<evidence type="ECO:0000305" key="2"/>
<sequence>MSFTMREMLEAGVHFGHQTRFWNPKMAPYIFGHRNKIHIINLEKTVPLFNEATKYARQLAGKRGTILFVGTKRQARDVVAMEAARAGMPFVETRWLGGMLTNFKTVKGSLKKLKEMQAQVEAGTQPAIKKEALMFQREIAKLEKDIGGIQDMNALPDALFVIDVGFHKIAIAEAKKLGIPVIGVVDTNHSPVGIDYVIPGNDDSAKAVALYARVMADAIIEGKANSLNEVVEAAAGASDEFVEVSDPA</sequence>
<name>RS2_LEPCP</name>
<accession>B1XXJ5</accession>
<organism>
    <name type="scientific">Leptothrix cholodnii (strain ATCC 51168 / LMG 8142 / SP-6)</name>
    <name type="common">Leptothrix discophora (strain SP-6)</name>
    <dbReference type="NCBI Taxonomy" id="395495"/>
    <lineage>
        <taxon>Bacteria</taxon>
        <taxon>Pseudomonadati</taxon>
        <taxon>Pseudomonadota</taxon>
        <taxon>Betaproteobacteria</taxon>
        <taxon>Burkholderiales</taxon>
        <taxon>Sphaerotilaceae</taxon>
        <taxon>Leptothrix</taxon>
    </lineage>
</organism>
<comment type="similarity">
    <text evidence="1">Belongs to the universal ribosomal protein uS2 family.</text>
</comment>